<gene>
    <name evidence="1" type="primary">ilvC</name>
    <name type="ordered locus">Tola_0279</name>
</gene>
<comment type="function">
    <text evidence="1">Involved in the biosynthesis of branched-chain amino acids (BCAA). Catalyzes an alkyl-migration followed by a ketol-acid reduction of (S)-2-acetolactate (S2AL) to yield (R)-2,3-dihydroxy-isovalerate. In the isomerase reaction, S2AL is rearranged via a Mg-dependent methyl migration to produce 3-hydroxy-3-methyl-2-ketobutyrate (HMKB). In the reductase reaction, this 2-ketoacid undergoes a metal-dependent reduction by NADPH to yield (R)-2,3-dihydroxy-isovalerate.</text>
</comment>
<comment type="catalytic activity">
    <reaction evidence="1">
        <text>(2R)-2,3-dihydroxy-3-methylbutanoate + NADP(+) = (2S)-2-acetolactate + NADPH + H(+)</text>
        <dbReference type="Rhea" id="RHEA:22068"/>
        <dbReference type="ChEBI" id="CHEBI:15378"/>
        <dbReference type="ChEBI" id="CHEBI:49072"/>
        <dbReference type="ChEBI" id="CHEBI:57783"/>
        <dbReference type="ChEBI" id="CHEBI:58349"/>
        <dbReference type="ChEBI" id="CHEBI:58476"/>
        <dbReference type="EC" id="1.1.1.86"/>
    </reaction>
</comment>
<comment type="catalytic activity">
    <reaction evidence="1">
        <text>(2R,3R)-2,3-dihydroxy-3-methylpentanoate + NADP(+) = (S)-2-ethyl-2-hydroxy-3-oxobutanoate + NADPH + H(+)</text>
        <dbReference type="Rhea" id="RHEA:13493"/>
        <dbReference type="ChEBI" id="CHEBI:15378"/>
        <dbReference type="ChEBI" id="CHEBI:49256"/>
        <dbReference type="ChEBI" id="CHEBI:49258"/>
        <dbReference type="ChEBI" id="CHEBI:57783"/>
        <dbReference type="ChEBI" id="CHEBI:58349"/>
        <dbReference type="EC" id="1.1.1.86"/>
    </reaction>
</comment>
<comment type="cofactor">
    <cofactor evidence="1">
        <name>Mg(2+)</name>
        <dbReference type="ChEBI" id="CHEBI:18420"/>
    </cofactor>
    <text evidence="1">Binds 2 magnesium ions per subunit.</text>
</comment>
<comment type="pathway">
    <text evidence="1">Amino-acid biosynthesis; L-isoleucine biosynthesis; L-isoleucine from 2-oxobutanoate: step 2/4.</text>
</comment>
<comment type="pathway">
    <text evidence="1">Amino-acid biosynthesis; L-valine biosynthesis; L-valine from pyruvate: step 2/4.</text>
</comment>
<comment type="similarity">
    <text evidence="1">Belongs to the ketol-acid reductoisomerase family.</text>
</comment>
<proteinExistence type="inferred from homology"/>
<sequence length="494" mass="54004">MANYFNTLNLRQQLEQLGKCRFMNRDEFASECDFLKGKKVVIVGCGAQGLNQGLNMRDSGLDVSYALRAEAIAEKRKSFKQASENGFTVGTYEDLIPTADLVVNLTPDKQHTSVVKAVMPLMKDGAALGYSHGFNIVEEGTQIRKDITVVMVAPKCPGTEVREEYKRGFGVPTLIAVHPENDPKGDGLAIAKAWAAATGGHRAGVLQSSFVAEVKSDLMGEQTILCGMLQAGSILCYEKMIADGIDAGYAGKLIQFGWETITEALKQGGITAMMDRLSNPAKLRAFELAEEMRVLMRPLFRKHQDDIISGAFSSGMMADWANNDADLFRWREETGASAFENAPAFDGAIAEQEYFDNGILMVAMVKAGVELAFETMTESGIIAESAYYESLHELPLIANTIARKRLYEMNVVISDTAEYGNYLFANAAVPLLKAHIMPKVGTDVIGKTLSVKDNGVDNVTLVQVNEIIRNHPIEQVGKVLRGYMKDMKRIAVGG</sequence>
<keyword id="KW-0028">Amino-acid biosynthesis</keyword>
<keyword id="KW-0100">Branched-chain amino acid biosynthesis</keyword>
<keyword id="KW-0460">Magnesium</keyword>
<keyword id="KW-0479">Metal-binding</keyword>
<keyword id="KW-0521">NADP</keyword>
<keyword id="KW-0560">Oxidoreductase</keyword>
<keyword id="KW-1185">Reference proteome</keyword>
<keyword id="KW-0677">Repeat</keyword>
<accession>C4L8N9</accession>
<reference key="1">
    <citation type="submission" date="2009-05" db="EMBL/GenBank/DDBJ databases">
        <title>Complete sequence of Tolumonas auensis DSM 9187.</title>
        <authorList>
            <consortium name="US DOE Joint Genome Institute"/>
            <person name="Lucas S."/>
            <person name="Copeland A."/>
            <person name="Lapidus A."/>
            <person name="Glavina del Rio T."/>
            <person name="Tice H."/>
            <person name="Bruce D."/>
            <person name="Goodwin L."/>
            <person name="Pitluck S."/>
            <person name="Chertkov O."/>
            <person name="Brettin T."/>
            <person name="Detter J.C."/>
            <person name="Han C."/>
            <person name="Larimer F."/>
            <person name="Land M."/>
            <person name="Hauser L."/>
            <person name="Kyrpides N."/>
            <person name="Mikhailova N."/>
            <person name="Spring S."/>
            <person name="Beller H."/>
        </authorList>
    </citation>
    <scope>NUCLEOTIDE SEQUENCE [LARGE SCALE GENOMIC DNA]</scope>
    <source>
        <strain>DSM 9187 / NBRC 110442 / TA 4</strain>
    </source>
</reference>
<name>ILVC_TOLAT</name>
<feature type="chain" id="PRO_1000206095" description="Ketol-acid reductoisomerase (NADP(+))">
    <location>
        <begin position="1"/>
        <end position="494"/>
    </location>
</feature>
<feature type="domain" description="KARI N-terminal Rossmann" evidence="2">
    <location>
        <begin position="14"/>
        <end position="208"/>
    </location>
</feature>
<feature type="domain" description="KARI C-terminal knotted 1" evidence="3">
    <location>
        <begin position="209"/>
        <end position="344"/>
    </location>
</feature>
<feature type="domain" description="KARI C-terminal knotted 2" evidence="3">
    <location>
        <begin position="345"/>
        <end position="487"/>
    </location>
</feature>
<feature type="active site" evidence="1">
    <location>
        <position position="132"/>
    </location>
</feature>
<feature type="binding site" evidence="1">
    <location>
        <begin position="45"/>
        <end position="48"/>
    </location>
    <ligand>
        <name>NADP(+)</name>
        <dbReference type="ChEBI" id="CHEBI:58349"/>
    </ligand>
</feature>
<feature type="binding site" evidence="1">
    <location>
        <position position="68"/>
    </location>
    <ligand>
        <name>NADP(+)</name>
        <dbReference type="ChEBI" id="CHEBI:58349"/>
    </ligand>
</feature>
<feature type="binding site" evidence="1">
    <location>
        <position position="76"/>
    </location>
    <ligand>
        <name>NADP(+)</name>
        <dbReference type="ChEBI" id="CHEBI:58349"/>
    </ligand>
</feature>
<feature type="binding site" evidence="1">
    <location>
        <position position="78"/>
    </location>
    <ligand>
        <name>NADP(+)</name>
        <dbReference type="ChEBI" id="CHEBI:58349"/>
    </ligand>
</feature>
<feature type="binding site" evidence="1">
    <location>
        <begin position="108"/>
        <end position="110"/>
    </location>
    <ligand>
        <name>NADP(+)</name>
        <dbReference type="ChEBI" id="CHEBI:58349"/>
    </ligand>
</feature>
<feature type="binding site" evidence="1">
    <location>
        <position position="158"/>
    </location>
    <ligand>
        <name>NADP(+)</name>
        <dbReference type="ChEBI" id="CHEBI:58349"/>
    </ligand>
</feature>
<feature type="binding site" evidence="1">
    <location>
        <position position="217"/>
    </location>
    <ligand>
        <name>Mg(2+)</name>
        <dbReference type="ChEBI" id="CHEBI:18420"/>
        <label>1</label>
    </ligand>
</feature>
<feature type="binding site" evidence="1">
    <location>
        <position position="217"/>
    </location>
    <ligand>
        <name>Mg(2+)</name>
        <dbReference type="ChEBI" id="CHEBI:18420"/>
        <label>2</label>
    </ligand>
</feature>
<feature type="binding site" evidence="1">
    <location>
        <position position="221"/>
    </location>
    <ligand>
        <name>Mg(2+)</name>
        <dbReference type="ChEBI" id="CHEBI:18420"/>
        <label>1</label>
    </ligand>
</feature>
<feature type="binding site" evidence="1">
    <location>
        <position position="389"/>
    </location>
    <ligand>
        <name>Mg(2+)</name>
        <dbReference type="ChEBI" id="CHEBI:18420"/>
        <label>2</label>
    </ligand>
</feature>
<feature type="binding site" evidence="1">
    <location>
        <position position="393"/>
    </location>
    <ligand>
        <name>Mg(2+)</name>
        <dbReference type="ChEBI" id="CHEBI:18420"/>
        <label>2</label>
    </ligand>
</feature>
<feature type="binding site" evidence="1">
    <location>
        <position position="414"/>
    </location>
    <ligand>
        <name>substrate</name>
    </ligand>
</feature>
<dbReference type="EC" id="1.1.1.86" evidence="1"/>
<dbReference type="EMBL" id="CP001616">
    <property type="protein sequence ID" value="ACQ91909.1"/>
    <property type="molecule type" value="Genomic_DNA"/>
</dbReference>
<dbReference type="RefSeq" id="WP_012728508.1">
    <property type="nucleotide sequence ID" value="NC_012691.1"/>
</dbReference>
<dbReference type="SMR" id="C4L8N9"/>
<dbReference type="STRING" id="595494.Tola_0279"/>
<dbReference type="KEGG" id="tau:Tola_0279"/>
<dbReference type="eggNOG" id="COG0059">
    <property type="taxonomic scope" value="Bacteria"/>
</dbReference>
<dbReference type="HOGENOM" id="CLU_551905_0_0_6"/>
<dbReference type="OrthoDB" id="9804088at2"/>
<dbReference type="UniPathway" id="UPA00047">
    <property type="reaction ID" value="UER00056"/>
</dbReference>
<dbReference type="UniPathway" id="UPA00049">
    <property type="reaction ID" value="UER00060"/>
</dbReference>
<dbReference type="Proteomes" id="UP000009073">
    <property type="component" value="Chromosome"/>
</dbReference>
<dbReference type="GO" id="GO:0005829">
    <property type="term" value="C:cytosol"/>
    <property type="evidence" value="ECO:0007669"/>
    <property type="project" value="TreeGrafter"/>
</dbReference>
<dbReference type="GO" id="GO:0004455">
    <property type="term" value="F:ketol-acid reductoisomerase activity"/>
    <property type="evidence" value="ECO:0007669"/>
    <property type="project" value="UniProtKB-UniRule"/>
</dbReference>
<dbReference type="GO" id="GO:0000287">
    <property type="term" value="F:magnesium ion binding"/>
    <property type="evidence" value="ECO:0007669"/>
    <property type="project" value="UniProtKB-UniRule"/>
</dbReference>
<dbReference type="GO" id="GO:0009097">
    <property type="term" value="P:isoleucine biosynthetic process"/>
    <property type="evidence" value="ECO:0007669"/>
    <property type="project" value="UniProtKB-UniRule"/>
</dbReference>
<dbReference type="GO" id="GO:0009099">
    <property type="term" value="P:L-valine biosynthetic process"/>
    <property type="evidence" value="ECO:0007669"/>
    <property type="project" value="UniProtKB-UniRule"/>
</dbReference>
<dbReference type="FunFam" id="1.10.1040.10:FF:000007">
    <property type="entry name" value="Ketol-acid reductoisomerase (NADP(+))"/>
    <property type="match status" value="1"/>
</dbReference>
<dbReference type="FunFam" id="3.40.50.720:FF:000043">
    <property type="entry name" value="Ketol-acid reductoisomerase (NADP(+))"/>
    <property type="match status" value="1"/>
</dbReference>
<dbReference type="Gene3D" id="1.10.1040.10">
    <property type="entry name" value="N-(1-d-carboxylethyl)-l-norvaline Dehydrogenase, domain 2"/>
    <property type="match status" value="1"/>
</dbReference>
<dbReference type="Gene3D" id="3.40.50.720">
    <property type="entry name" value="NAD(P)-binding Rossmann-like Domain"/>
    <property type="match status" value="1"/>
</dbReference>
<dbReference type="HAMAP" id="MF_00435">
    <property type="entry name" value="IlvC"/>
    <property type="match status" value="1"/>
</dbReference>
<dbReference type="InterPro" id="IPR008927">
    <property type="entry name" value="6-PGluconate_DH-like_C_sf"/>
</dbReference>
<dbReference type="InterPro" id="IPR013328">
    <property type="entry name" value="6PGD_dom2"/>
</dbReference>
<dbReference type="InterPro" id="IPR013023">
    <property type="entry name" value="KARI"/>
</dbReference>
<dbReference type="InterPro" id="IPR000506">
    <property type="entry name" value="KARI_C"/>
</dbReference>
<dbReference type="InterPro" id="IPR013116">
    <property type="entry name" value="KARI_N"/>
</dbReference>
<dbReference type="InterPro" id="IPR036291">
    <property type="entry name" value="NAD(P)-bd_dom_sf"/>
</dbReference>
<dbReference type="NCBIfam" id="TIGR00465">
    <property type="entry name" value="ilvC"/>
    <property type="match status" value="1"/>
</dbReference>
<dbReference type="NCBIfam" id="NF003557">
    <property type="entry name" value="PRK05225.1"/>
    <property type="match status" value="1"/>
</dbReference>
<dbReference type="PANTHER" id="PTHR21371">
    <property type="entry name" value="KETOL-ACID REDUCTOISOMERASE, MITOCHONDRIAL"/>
    <property type="match status" value="1"/>
</dbReference>
<dbReference type="PANTHER" id="PTHR21371:SF1">
    <property type="entry name" value="KETOL-ACID REDUCTOISOMERASE, MITOCHONDRIAL"/>
    <property type="match status" value="1"/>
</dbReference>
<dbReference type="Pfam" id="PF01450">
    <property type="entry name" value="KARI_C"/>
    <property type="match status" value="2"/>
</dbReference>
<dbReference type="Pfam" id="PF07991">
    <property type="entry name" value="KARI_N"/>
    <property type="match status" value="1"/>
</dbReference>
<dbReference type="SUPFAM" id="SSF48179">
    <property type="entry name" value="6-phosphogluconate dehydrogenase C-terminal domain-like"/>
    <property type="match status" value="2"/>
</dbReference>
<dbReference type="SUPFAM" id="SSF51735">
    <property type="entry name" value="NAD(P)-binding Rossmann-fold domains"/>
    <property type="match status" value="1"/>
</dbReference>
<dbReference type="PROSITE" id="PS51851">
    <property type="entry name" value="KARI_C"/>
    <property type="match status" value="2"/>
</dbReference>
<dbReference type="PROSITE" id="PS51850">
    <property type="entry name" value="KARI_N"/>
    <property type="match status" value="1"/>
</dbReference>
<protein>
    <recommendedName>
        <fullName evidence="1">Ketol-acid reductoisomerase (NADP(+))</fullName>
        <shortName evidence="1">KARI</shortName>
        <ecNumber evidence="1">1.1.1.86</ecNumber>
    </recommendedName>
    <alternativeName>
        <fullName evidence="1">Acetohydroxy-acid isomeroreductase</fullName>
        <shortName evidence="1">AHIR</shortName>
    </alternativeName>
    <alternativeName>
        <fullName evidence="1">Alpha-keto-beta-hydroxylacyl reductoisomerase</fullName>
    </alternativeName>
    <alternativeName>
        <fullName evidence="1">Ketol-acid reductoisomerase type 2</fullName>
    </alternativeName>
    <alternativeName>
        <fullName evidence="1">Ketol-acid reductoisomerase type II</fullName>
    </alternativeName>
</protein>
<evidence type="ECO:0000255" key="1">
    <source>
        <dbReference type="HAMAP-Rule" id="MF_00435"/>
    </source>
</evidence>
<evidence type="ECO:0000255" key="2">
    <source>
        <dbReference type="PROSITE-ProRule" id="PRU01197"/>
    </source>
</evidence>
<evidence type="ECO:0000255" key="3">
    <source>
        <dbReference type="PROSITE-ProRule" id="PRU01198"/>
    </source>
</evidence>
<organism>
    <name type="scientific">Tolumonas auensis (strain DSM 9187 / NBRC 110442 / TA 4)</name>
    <dbReference type="NCBI Taxonomy" id="595494"/>
    <lineage>
        <taxon>Bacteria</taxon>
        <taxon>Pseudomonadati</taxon>
        <taxon>Pseudomonadota</taxon>
        <taxon>Gammaproteobacteria</taxon>
        <taxon>Aeromonadales</taxon>
        <taxon>Aeromonadaceae</taxon>
        <taxon>Tolumonas</taxon>
    </lineage>
</organism>